<organism>
    <name type="scientific">Pelophylax porosus brevipodus</name>
    <name type="common">Nagoya Daruma pond frog</name>
    <name type="synonym">Rana brevipoda porosa</name>
    <dbReference type="NCBI Taxonomy" id="88447"/>
    <lineage>
        <taxon>Eukaryota</taxon>
        <taxon>Metazoa</taxon>
        <taxon>Chordata</taxon>
        <taxon>Craniata</taxon>
        <taxon>Vertebrata</taxon>
        <taxon>Euteleostomi</taxon>
        <taxon>Amphibia</taxon>
        <taxon>Batrachia</taxon>
        <taxon>Anura</taxon>
        <taxon>Neobatrachia</taxon>
        <taxon>Ranoidea</taxon>
        <taxon>Ranidae</taxon>
        <taxon>Pelophylax</taxon>
    </lineage>
</organism>
<accession>P32423</accession>
<sequence length="24" mass="2531">FLPVLAGIAAKVVPALFCKITKKC</sequence>
<feature type="peptide" id="PRO_0000043539" description="Brevinin-1">
    <location>
        <begin position="1"/>
        <end position="24"/>
    </location>
</feature>
<feature type="disulfide bond" evidence="1">
    <location>
        <begin position="18"/>
        <end position="24"/>
    </location>
</feature>
<keyword id="KW-0878">Amphibian defense peptide</keyword>
<keyword id="KW-0044">Antibiotic</keyword>
<keyword id="KW-0929">Antimicrobial</keyword>
<keyword id="KW-0204">Cytolysis</keyword>
<keyword id="KW-0903">Direct protein sequencing</keyword>
<keyword id="KW-1015">Disulfide bond</keyword>
<keyword id="KW-0354">Hemolysis</keyword>
<keyword id="KW-0964">Secreted</keyword>
<dbReference type="PIR" id="JC1355">
    <property type="entry name" value="JC1355"/>
</dbReference>
<dbReference type="GO" id="GO:0005576">
    <property type="term" value="C:extracellular region"/>
    <property type="evidence" value="ECO:0007669"/>
    <property type="project" value="UniProtKB-SubCell"/>
</dbReference>
<dbReference type="GO" id="GO:0042742">
    <property type="term" value="P:defense response to bacterium"/>
    <property type="evidence" value="ECO:0007669"/>
    <property type="project" value="UniProtKB-KW"/>
</dbReference>
<dbReference type="GO" id="GO:0031640">
    <property type="term" value="P:killing of cells of another organism"/>
    <property type="evidence" value="ECO:0007669"/>
    <property type="project" value="UniProtKB-KW"/>
</dbReference>
<dbReference type="InterPro" id="IPR012520">
    <property type="entry name" value="Antimicrobial_frog_1"/>
</dbReference>
<dbReference type="Pfam" id="PF08018">
    <property type="entry name" value="Antimicrobial_1"/>
    <property type="match status" value="1"/>
</dbReference>
<comment type="function">
    <text>Shows antibacterial activity against representative Gram-negative and Gram-positive bacterial species, and a very high hemolytic activity.</text>
</comment>
<comment type="subcellular location">
    <subcellularLocation>
        <location>Secreted</location>
    </subcellularLocation>
</comment>
<comment type="tissue specificity">
    <text>Expressed by the skin glands.</text>
</comment>
<comment type="similarity">
    <text evidence="2">Belongs to the frog skin active peptide (FSAP) family. Brevinin subfamily.</text>
</comment>
<name>BR1_PELPV</name>
<proteinExistence type="evidence at protein level"/>
<evidence type="ECO:0000269" key="1">
    <source>
    </source>
</evidence>
<evidence type="ECO:0000305" key="2"/>
<protein>
    <recommendedName>
        <fullName>Brevinin-1</fullName>
    </recommendedName>
</protein>
<reference key="1">
    <citation type="journal article" date="1992" name="Biochem. Biophys. Res. Commun.">
        <title>Brevinin-1 and -2, unique antimicrobial peptides from the skin of the frog, Rana brevipoda porsa.</title>
        <authorList>
            <person name="Morikawa N."/>
            <person name="Hagiwara K."/>
            <person name="Nakajima T."/>
        </authorList>
    </citation>
    <scope>PROTEIN SEQUENCE</scope>
    <scope>DISULFIDE BOND</scope>
    <source>
        <tissue>Skin secretion</tissue>
    </source>
</reference>